<accession>Q4WZ66</accession>
<sequence length="261" mass="27796">MASVESRIIAITGGASGIGAATCRLLAERGAAVLCVCDISPKNFDDLKISIKKINPSTKVHCATVDVTSSVEVRQWIEGIISDFGDLHGAVNAAGIAQGAGMRNTPTIAEEVDEEWTRIMNTNLNGVFYCTREEVRAMKGLPATDRSIVNVGSIASVSHMPDVYAYGTSKGACAYFTTCVAADAFPLGIRINNVSPGVTNTPMLPQFAPMAKTFEEIEESYKKEGLSLIEAEDVARTIVWLLSEDSRPVFGANINVGACMP</sequence>
<evidence type="ECO:0000250" key="1">
    <source>
        <dbReference type="UniProtKB" id="B6D5I7"/>
    </source>
</evidence>
<evidence type="ECO:0000250" key="2">
    <source>
        <dbReference type="UniProtKB" id="L0E2Z4"/>
    </source>
</evidence>
<evidence type="ECO:0000250" key="3">
    <source>
        <dbReference type="UniProtKB" id="O93868"/>
    </source>
</evidence>
<evidence type="ECO:0000269" key="4">
    <source>
    </source>
</evidence>
<evidence type="ECO:0000269" key="5">
    <source>
    </source>
</evidence>
<evidence type="ECO:0000269" key="6">
    <source>
    </source>
</evidence>
<evidence type="ECO:0000269" key="7">
    <source>
    </source>
</evidence>
<evidence type="ECO:0000269" key="8">
    <source>
    </source>
</evidence>
<evidence type="ECO:0000269" key="9">
    <source>
    </source>
</evidence>
<evidence type="ECO:0000269" key="10">
    <source>
    </source>
</evidence>
<evidence type="ECO:0000269" key="11">
    <source>
    </source>
</evidence>
<evidence type="ECO:0000303" key="12">
    <source>
    </source>
</evidence>
<evidence type="ECO:0000303" key="13">
    <source>
    </source>
</evidence>
<evidence type="ECO:0000303" key="14">
    <source>
    </source>
</evidence>
<evidence type="ECO:0000305" key="15"/>
<evidence type="ECO:0000305" key="16">
    <source>
    </source>
</evidence>
<comment type="function">
    <text evidence="1 4 5 7 8 9 10 11">Chanoclavine-I dehydrogenase; part of the gene cluster that mediates the biosynthesis of fumiclavanine C, a fungal ergot alkaloid (PubMed:15933009, PubMed:26972831). DmaW catalyzes the first step of ergot alkaloid biosynthesis by condensing dimethylallyl diphosphate (DMAP) and tryptophan to form 4-dimethylallyl-L-tryptophan (PubMed:15870460). The second step is catalyzed by the methyltransferase easF that methylates 4-dimethylallyl-L-tryptophan in the presence of S-adenosyl-L-methionine, resulting in the formation of 4-dimethylallyl-L-abrine (By similarity). The catalase easC and the FAD-dependent oxidoreductase easE then transform 4-dimethylallyl-L-abrine to chanoclavine-I which is further oxidized by EasD in the presence of NAD(+), resulting in the formation of chanoclavine-I aldehyde (PubMed:20039019, PubMed:20526482, PubMed:21409592). EasA reduces chanoclavine-I aldehyde to dihydrochanoclavine-I aldehyde that spontaneously dehydrates to form 6,8-dimethyl-6,7-didehydroergoline (PubMed:20526482). EasG then catalyzes the reduction of 6,8-dimethyl-6,7-didehydroergoline to form festuclavine (PubMed:20526482). Hydrolysis of festuclavine by easM then leads to the formation of fumigaclavine B which is in turn acetylated by easN to fumigaclavine A (PubMed:26972831). Finally, easL catalyzes the conversion of fumigaclavine A into fumigaclavine C by attaching a dimethylallyl moiety to C-2 of the indole nucleus (PubMed:19672909).</text>
</comment>
<comment type="catalytic activity">
    <reaction evidence="8">
        <text>chanoclavine-I + NAD(+) = chanoclavine-I aldehyde + NADH + H(+)</text>
        <dbReference type="Rhea" id="RHEA:33891"/>
        <dbReference type="ChEBI" id="CHEBI:15378"/>
        <dbReference type="ChEBI" id="CHEBI:57540"/>
        <dbReference type="ChEBI" id="CHEBI:57945"/>
        <dbReference type="ChEBI" id="CHEBI:71487"/>
        <dbReference type="ChEBI" id="CHEBI:72949"/>
        <dbReference type="EC" id="1.1.1.332"/>
    </reaction>
</comment>
<comment type="biophysicochemical properties">
    <kinetics>
        <KM evidence="8">0.27 mM for Chanoclavine-I</KM>
        <KM evidence="8">1.1 mM for NAD(+)</KM>
    </kinetics>
</comment>
<comment type="pathway">
    <text evidence="8">Alkaloid biosynthesis; ergot alkaloid biosynthesis.</text>
</comment>
<comment type="induction">
    <text evidence="6">The expression of the ergot alkaloid synthesis cluster which leads to the synthesis of fumigaclavines is positively regulated by the brlA and stuA transcription factors (PubMed:19028996).</text>
</comment>
<comment type="biotechnology">
    <text evidence="16">Ergot alkaloids are known for their toxic effects on humans who consume contaminated grains or livestock that graze on grasses harboring ergot alkaloid-producing fungi (PubMed:19523108). Due to their strong affinity for monoamine neurotransmitter receptors they may also have clinical uses such as treatment of migraines, Parkinson's disease and cerebrovascular insufficiency (PubMed:19523108).</text>
</comment>
<comment type="similarity">
    <text evidence="15">Belongs to the short-chain dehydrogenases/reductases (SDR) family.</text>
</comment>
<reference key="1">
    <citation type="journal article" date="2005" name="Nature">
        <title>Genomic sequence of the pathogenic and allergenic filamentous fungus Aspergillus fumigatus.</title>
        <authorList>
            <person name="Nierman W.C."/>
            <person name="Pain A."/>
            <person name="Anderson M.J."/>
            <person name="Wortman J.R."/>
            <person name="Kim H.S."/>
            <person name="Arroyo J."/>
            <person name="Berriman M."/>
            <person name="Abe K."/>
            <person name="Archer D.B."/>
            <person name="Bermejo C."/>
            <person name="Bennett J.W."/>
            <person name="Bowyer P."/>
            <person name="Chen D."/>
            <person name="Collins M."/>
            <person name="Coulsen R."/>
            <person name="Davies R."/>
            <person name="Dyer P.S."/>
            <person name="Farman M.L."/>
            <person name="Fedorova N."/>
            <person name="Fedorova N.D."/>
            <person name="Feldblyum T.V."/>
            <person name="Fischer R."/>
            <person name="Fosker N."/>
            <person name="Fraser A."/>
            <person name="Garcia J.L."/>
            <person name="Garcia M.J."/>
            <person name="Goble A."/>
            <person name="Goldman G.H."/>
            <person name="Gomi K."/>
            <person name="Griffith-Jones S."/>
            <person name="Gwilliam R."/>
            <person name="Haas B.J."/>
            <person name="Haas H."/>
            <person name="Harris D.E."/>
            <person name="Horiuchi H."/>
            <person name="Huang J."/>
            <person name="Humphray S."/>
            <person name="Jimenez J."/>
            <person name="Keller N."/>
            <person name="Khouri H."/>
            <person name="Kitamoto K."/>
            <person name="Kobayashi T."/>
            <person name="Konzack S."/>
            <person name="Kulkarni R."/>
            <person name="Kumagai T."/>
            <person name="Lafton A."/>
            <person name="Latge J.-P."/>
            <person name="Li W."/>
            <person name="Lord A."/>
            <person name="Lu C."/>
            <person name="Majoros W.H."/>
            <person name="May G.S."/>
            <person name="Miller B.L."/>
            <person name="Mohamoud Y."/>
            <person name="Molina M."/>
            <person name="Monod M."/>
            <person name="Mouyna I."/>
            <person name="Mulligan S."/>
            <person name="Murphy L.D."/>
            <person name="O'Neil S."/>
            <person name="Paulsen I."/>
            <person name="Penalva M.A."/>
            <person name="Pertea M."/>
            <person name="Price C."/>
            <person name="Pritchard B.L."/>
            <person name="Quail M.A."/>
            <person name="Rabbinowitsch E."/>
            <person name="Rawlins N."/>
            <person name="Rajandream M.A."/>
            <person name="Reichard U."/>
            <person name="Renauld H."/>
            <person name="Robson G.D."/>
            <person name="Rodriguez de Cordoba S."/>
            <person name="Rodriguez-Pena J.M."/>
            <person name="Ronning C.M."/>
            <person name="Rutter S."/>
            <person name="Salzberg S.L."/>
            <person name="Sanchez M."/>
            <person name="Sanchez-Ferrero J.C."/>
            <person name="Saunders D."/>
            <person name="Seeger K."/>
            <person name="Squares R."/>
            <person name="Squares S."/>
            <person name="Takeuchi M."/>
            <person name="Tekaia F."/>
            <person name="Turner G."/>
            <person name="Vazquez de Aldana C.R."/>
            <person name="Weidman J."/>
            <person name="White O."/>
            <person name="Woodward J.R."/>
            <person name="Yu J.-H."/>
            <person name="Fraser C.M."/>
            <person name="Galagan J.E."/>
            <person name="Asai K."/>
            <person name="Machida M."/>
            <person name="Hall N."/>
            <person name="Barrell B.G."/>
            <person name="Denning D.W."/>
        </authorList>
    </citation>
    <scope>NUCLEOTIDE SEQUENCE [LARGE SCALE GENOMIC DNA]</scope>
    <source>
        <strain>ATCC MYA-4609 / CBS 101355 / FGSC A1100 / Af293</strain>
    </source>
</reference>
<reference key="2">
    <citation type="journal article" date="2005" name="Appl. Environ. Microbiol.">
        <title>An ergot alkaloid biosynthesis gene and clustered hypothetical genes from Aspergillus fumigatus.</title>
        <authorList>
            <person name="Coyle C.M."/>
            <person name="Panaccione D.G."/>
        </authorList>
    </citation>
    <scope>IDENTIFICATION</scope>
    <scope>FUNCTION</scope>
</reference>
<reference key="3">
    <citation type="journal article" date="2005" name="Microbiology">
        <title>Overproduction, purification and characterization of FgaPT2, a dimethylallyltryptophan synthase from Aspergillus fumigatus.</title>
        <authorList>
            <person name="Unsoeld I.A."/>
            <person name="Li S.-M."/>
        </authorList>
    </citation>
    <scope>FUNCTION</scope>
</reference>
<reference key="4">
    <citation type="journal article" date="2009" name="ChemBioChem">
        <title>Ergot alkaloid biosynthesis in Aspergillus fumigatus: FgaAT catalyses the acetylation of fumigaclavine B.</title>
        <authorList>
            <person name="Liu X."/>
            <person name="Wang L."/>
            <person name="Steffan N."/>
            <person name="Yin W.B."/>
            <person name="Li S.M."/>
        </authorList>
    </citation>
    <scope>FUNCTION</scope>
</reference>
<reference key="5">
    <citation type="journal article" date="2009" name="Eukaryot. Cell">
        <title>Transcriptional profiling identifies a role for BrlA in the response to nitrogen depletion and for StuA in the regulation of secondary metabolite clusters in Aspergillus fumigatus.</title>
        <authorList>
            <person name="Twumasi-Boateng K."/>
            <person name="Yu Y."/>
            <person name="Chen D."/>
            <person name="Gravelat F.N."/>
            <person name="Nierman W.C."/>
            <person name="Sheppard D.C."/>
        </authorList>
    </citation>
    <scope>INDUCTION</scope>
</reference>
<reference key="6">
    <citation type="journal article" date="2009" name="Mol. Plant Pathol.">
        <title>Ergot: from witchcraft to biotechnology.</title>
        <authorList>
            <person name="Haarmann T."/>
            <person name="Rolke Y."/>
            <person name="Giesbert S."/>
            <person name="Tudzynski P."/>
        </authorList>
    </citation>
    <scope>BIOTECHNOLOGY</scope>
</reference>
<reference key="7">
    <citation type="journal article" date="2010" name="Arch. Microbiol.">
        <title>Ergot alkaloid biosynthesis in Aspergillus fumigatus: conversion of chanoclavine-I to chanoclavine-I aldehyde catalyzed by a short-chain alcohol dehydrogenase FgaDH.</title>
        <authorList>
            <person name="Wallwey C."/>
            <person name="Matuschek M."/>
            <person name="Li S.M."/>
        </authorList>
    </citation>
    <scope>FUNCTION</scope>
    <scope>CATALYTIC ACTIVITY</scope>
    <scope>BIOPHYSICOCHEMICAL PROPERTIES</scope>
    <scope>PATHWAY</scope>
</reference>
<reference key="8">
    <citation type="journal article" date="2010" name="Org. Biomol. Chem.">
        <title>Ergot alkaloid biosynthesis in Aspergillus fumigatus: Conversion of chanoclavine-I aldehyde to festuclavine by the festuclavine synthase FgaFS in the presence of the old yellow enzyme FgaOx3.</title>
        <authorList>
            <person name="Wallwey C."/>
            <person name="Matuschek M."/>
            <person name="Xie X.L."/>
            <person name="Li S.M."/>
        </authorList>
    </citation>
    <scope>FUNCTION</scope>
    <scope>NOMENCLATURE</scope>
</reference>
<reference key="9">
    <citation type="journal article" date="2011" name="Curr. Genet.">
        <title>Ergot cluster-encoded catalase is required for synthesis of chanoclavine-I in Aspergillus fumigatus.</title>
        <authorList>
            <person name="Goetz K.E."/>
            <person name="Coyle C.M."/>
            <person name="Cheng J.Z."/>
            <person name="O'Connor S.E."/>
            <person name="Panaccione D.G."/>
        </authorList>
    </citation>
    <scope>FUNCTION</scope>
</reference>
<reference key="10">
    <citation type="journal article" date="2012" name="Mycologia">
        <title>Chemotypic and genotypic diversity in the ergot alkaloid pathway of Aspergillus fumigatus.</title>
        <authorList>
            <person name="Robinson S.L."/>
            <person name="Panaccione D.G."/>
        </authorList>
    </citation>
    <scope>IDENTIFICATION</scope>
    <scope>NOMENCLATURE</scope>
</reference>
<reference key="11">
    <citation type="journal article" date="2016" name="Curr. Genet.">
        <title>Functional analysis of the gene controlling hydroxylation of festuclavine in the ergot alkaloid pathway of Neosartorya fumigata.</title>
        <authorList>
            <person name="Bilovol Y."/>
            <person name="Panaccione D.G."/>
        </authorList>
    </citation>
    <scope>FUNCTION</scope>
</reference>
<name>EASD_ASPFU</name>
<feature type="chain" id="PRO_0000421747" description="Chanoclavine-I dehydrogenase easD">
    <location>
        <begin position="1"/>
        <end position="261"/>
    </location>
</feature>
<feature type="active site" description="Proton donor" evidence="3">
    <location>
        <position position="166"/>
    </location>
</feature>
<feature type="active site" description="Lowers pKa of active site Tyr" evidence="3">
    <location>
        <position position="170"/>
    </location>
</feature>
<feature type="binding site" evidence="2">
    <location>
        <position position="18"/>
    </location>
    <ligand>
        <name>NADP(+)</name>
        <dbReference type="ChEBI" id="CHEBI:58349"/>
    </ligand>
</feature>
<feature type="binding site" evidence="2">
    <location>
        <position position="48"/>
    </location>
    <ligand>
        <name>NADP(+)</name>
        <dbReference type="ChEBI" id="CHEBI:58349"/>
    </ligand>
</feature>
<feature type="binding site" evidence="2">
    <location>
        <position position="66"/>
    </location>
    <ligand>
        <name>NADP(+)</name>
        <dbReference type="ChEBI" id="CHEBI:58349"/>
    </ligand>
</feature>
<feature type="binding site" evidence="2">
    <location>
        <position position="132"/>
    </location>
    <ligand>
        <name>NADP(+)</name>
        <dbReference type="ChEBI" id="CHEBI:58349"/>
    </ligand>
</feature>
<feature type="binding site" evidence="3">
    <location>
        <position position="166"/>
    </location>
    <ligand>
        <name>NADP(+)</name>
        <dbReference type="ChEBI" id="CHEBI:58349"/>
    </ligand>
</feature>
<feature type="binding site" evidence="3">
    <location>
        <position position="170"/>
    </location>
    <ligand>
        <name>NADP(+)</name>
        <dbReference type="ChEBI" id="CHEBI:58349"/>
    </ligand>
</feature>
<feature type="binding site" evidence="2">
    <location>
        <position position="201"/>
    </location>
    <ligand>
        <name>NADP(+)</name>
        <dbReference type="ChEBI" id="CHEBI:58349"/>
    </ligand>
</feature>
<dbReference type="EC" id="1.1.1.332" evidence="8"/>
<dbReference type="EMBL" id="AAHF01000001">
    <property type="protein sequence ID" value="EAL94099.1"/>
    <property type="molecule type" value="Genomic_DNA"/>
</dbReference>
<dbReference type="RefSeq" id="XP_756137.1">
    <property type="nucleotide sequence ID" value="XM_751044.1"/>
</dbReference>
<dbReference type="SMR" id="Q4WZ66"/>
<dbReference type="STRING" id="330879.Q4WZ66"/>
<dbReference type="EnsemblFungi" id="EAL94099">
    <property type="protein sequence ID" value="EAL94099"/>
    <property type="gene ID" value="AFUA_2G18000"/>
</dbReference>
<dbReference type="GeneID" id="3512712"/>
<dbReference type="KEGG" id="afm:AFUA_2G18000"/>
<dbReference type="VEuPathDB" id="FungiDB:Afu2g18000"/>
<dbReference type="eggNOG" id="KOG0725">
    <property type="taxonomic scope" value="Eukaryota"/>
</dbReference>
<dbReference type="HOGENOM" id="CLU_010194_1_0_1"/>
<dbReference type="InParanoid" id="Q4WZ66"/>
<dbReference type="OMA" id="MATHYGI"/>
<dbReference type="OrthoDB" id="1669814at2759"/>
<dbReference type="UniPathway" id="UPA00327"/>
<dbReference type="Proteomes" id="UP000002530">
    <property type="component" value="Chromosome 2"/>
</dbReference>
<dbReference type="GO" id="GO:0016491">
    <property type="term" value="F:oxidoreductase activity"/>
    <property type="evidence" value="ECO:0000314"/>
    <property type="project" value="AspGD"/>
</dbReference>
<dbReference type="GO" id="GO:0016616">
    <property type="term" value="F:oxidoreductase activity, acting on the CH-OH group of donors, NAD or NADP as acceptor"/>
    <property type="evidence" value="ECO:0000250"/>
    <property type="project" value="UniProtKB"/>
</dbReference>
<dbReference type="GO" id="GO:0009820">
    <property type="term" value="P:alkaloid metabolic process"/>
    <property type="evidence" value="ECO:0000314"/>
    <property type="project" value="AspGD"/>
</dbReference>
<dbReference type="GO" id="GO:0035837">
    <property type="term" value="P:ergot alkaloid biosynthetic process"/>
    <property type="evidence" value="ECO:0000250"/>
    <property type="project" value="UniProtKB"/>
</dbReference>
<dbReference type="GO" id="GO:1900809">
    <property type="term" value="P:fumigaclavine C biosynthetic process"/>
    <property type="evidence" value="ECO:0000314"/>
    <property type="project" value="GO_Central"/>
</dbReference>
<dbReference type="GO" id="GO:0051289">
    <property type="term" value="P:protein homotetramerization"/>
    <property type="evidence" value="ECO:0000250"/>
    <property type="project" value="UniProtKB"/>
</dbReference>
<dbReference type="CDD" id="cd05233">
    <property type="entry name" value="SDR_c"/>
    <property type="match status" value="1"/>
</dbReference>
<dbReference type="FunFam" id="3.40.50.720:FF:000979">
    <property type="entry name" value="Chanoclavine-I dehydrogenase easD"/>
    <property type="match status" value="1"/>
</dbReference>
<dbReference type="Gene3D" id="3.40.50.720">
    <property type="entry name" value="NAD(P)-binding Rossmann-like Domain"/>
    <property type="match status" value="1"/>
</dbReference>
<dbReference type="InterPro" id="IPR036291">
    <property type="entry name" value="NAD(P)-bd_dom_sf"/>
</dbReference>
<dbReference type="InterPro" id="IPR002347">
    <property type="entry name" value="SDR_fam"/>
</dbReference>
<dbReference type="PANTHER" id="PTHR24321">
    <property type="entry name" value="DEHYDROGENASES, SHORT CHAIN"/>
    <property type="match status" value="1"/>
</dbReference>
<dbReference type="PANTHER" id="PTHR24321:SF8">
    <property type="entry name" value="ESTRADIOL 17-BETA-DEHYDROGENASE 8-RELATED"/>
    <property type="match status" value="1"/>
</dbReference>
<dbReference type="Pfam" id="PF00106">
    <property type="entry name" value="adh_short"/>
    <property type="match status" value="1"/>
</dbReference>
<dbReference type="PRINTS" id="PR00081">
    <property type="entry name" value="GDHRDH"/>
</dbReference>
<dbReference type="SUPFAM" id="SSF51735">
    <property type="entry name" value="NAD(P)-binding Rossmann-fold domains"/>
    <property type="match status" value="1"/>
</dbReference>
<gene>
    <name evidence="14" type="primary">easD</name>
    <name evidence="13" type="synonym">fgaDH</name>
    <name type="ORF">AFUA_2G18000</name>
</gene>
<keyword id="KW-0017">Alkaloid metabolism</keyword>
<keyword id="KW-0521">NADP</keyword>
<keyword id="KW-0560">Oxidoreductase</keyword>
<keyword id="KW-1185">Reference proteome</keyword>
<organism>
    <name type="scientific">Aspergillus fumigatus (strain ATCC MYA-4609 / CBS 101355 / FGSC A1100 / Af293)</name>
    <name type="common">Neosartorya fumigata</name>
    <dbReference type="NCBI Taxonomy" id="330879"/>
    <lineage>
        <taxon>Eukaryota</taxon>
        <taxon>Fungi</taxon>
        <taxon>Dikarya</taxon>
        <taxon>Ascomycota</taxon>
        <taxon>Pezizomycotina</taxon>
        <taxon>Eurotiomycetes</taxon>
        <taxon>Eurotiomycetidae</taxon>
        <taxon>Eurotiales</taxon>
        <taxon>Aspergillaceae</taxon>
        <taxon>Aspergillus</taxon>
        <taxon>Aspergillus subgen. Fumigati</taxon>
    </lineage>
</organism>
<proteinExistence type="evidence at protein level"/>
<protein>
    <recommendedName>
        <fullName evidence="12">Chanoclavine-I dehydrogenase easD</fullName>
        <shortName evidence="12">ChaDH</shortName>
        <ecNumber evidence="8">1.1.1.332</ecNumber>
    </recommendedName>
    <alternativeName>
        <fullName evidence="14">Ergot alkaloid synthesis protein A</fullName>
    </alternativeName>
</protein>